<accession>Q86UB2</accession>
<accession>Q2M1J2</accession>
<accession>Q9NXM4</accession>
<keyword id="KW-0025">Alternative splicing</keyword>
<keyword id="KW-0963">Cytoplasm</keyword>
<keyword id="KW-0539">Nucleus</keyword>
<keyword id="KW-1267">Proteomics identification</keyword>
<keyword id="KW-1185">Reference proteome</keyword>
<organism>
    <name type="scientific">Homo sapiens</name>
    <name type="common">Human</name>
    <dbReference type="NCBI Taxonomy" id="9606"/>
    <lineage>
        <taxon>Eukaryota</taxon>
        <taxon>Metazoa</taxon>
        <taxon>Chordata</taxon>
        <taxon>Craniata</taxon>
        <taxon>Vertebrata</taxon>
        <taxon>Euteleostomi</taxon>
        <taxon>Mammalia</taxon>
        <taxon>Eutheria</taxon>
        <taxon>Euarchontoglires</taxon>
        <taxon>Primates</taxon>
        <taxon>Haplorrhini</taxon>
        <taxon>Catarrhini</taxon>
        <taxon>Hominidae</taxon>
        <taxon>Homo</taxon>
    </lineage>
</organism>
<reference key="1">
    <citation type="journal article" date="2004" name="Nature">
        <title>The DNA sequence and analysis of human chromosome 13.</title>
        <authorList>
            <person name="Dunham A."/>
            <person name="Matthews L.H."/>
            <person name="Burton J."/>
            <person name="Ashurst J.L."/>
            <person name="Howe K.L."/>
            <person name="Ashcroft K.J."/>
            <person name="Beare D.M."/>
            <person name="Burford D.C."/>
            <person name="Hunt S.E."/>
            <person name="Griffiths-Jones S."/>
            <person name="Jones M.C."/>
            <person name="Keenan S.J."/>
            <person name="Oliver K."/>
            <person name="Scott C.E."/>
            <person name="Ainscough R."/>
            <person name="Almeida J.P."/>
            <person name="Ambrose K.D."/>
            <person name="Andrews D.T."/>
            <person name="Ashwell R.I.S."/>
            <person name="Babbage A.K."/>
            <person name="Bagguley C.L."/>
            <person name="Bailey J."/>
            <person name="Bannerjee R."/>
            <person name="Barlow K.F."/>
            <person name="Bates K."/>
            <person name="Beasley H."/>
            <person name="Bird C.P."/>
            <person name="Bray-Allen S."/>
            <person name="Brown A.J."/>
            <person name="Brown J.Y."/>
            <person name="Burrill W."/>
            <person name="Carder C."/>
            <person name="Carter N.P."/>
            <person name="Chapman J.C."/>
            <person name="Clamp M.E."/>
            <person name="Clark S.Y."/>
            <person name="Clarke G."/>
            <person name="Clee C.M."/>
            <person name="Clegg S.C."/>
            <person name="Cobley V."/>
            <person name="Collins J.E."/>
            <person name="Corby N."/>
            <person name="Coville G.J."/>
            <person name="Deloukas P."/>
            <person name="Dhami P."/>
            <person name="Dunham I."/>
            <person name="Dunn M."/>
            <person name="Earthrowl M.E."/>
            <person name="Ellington A.G."/>
            <person name="Faulkner L."/>
            <person name="Frankish A.G."/>
            <person name="Frankland J."/>
            <person name="French L."/>
            <person name="Garner P."/>
            <person name="Garnett J."/>
            <person name="Gilbert J.G.R."/>
            <person name="Gilson C.J."/>
            <person name="Ghori J."/>
            <person name="Grafham D.V."/>
            <person name="Gribble S.M."/>
            <person name="Griffiths C."/>
            <person name="Hall R.E."/>
            <person name="Hammond S."/>
            <person name="Harley J.L."/>
            <person name="Hart E.A."/>
            <person name="Heath P.D."/>
            <person name="Howden P.J."/>
            <person name="Huckle E.J."/>
            <person name="Hunt P.J."/>
            <person name="Hunt A.R."/>
            <person name="Johnson C."/>
            <person name="Johnson D."/>
            <person name="Kay M."/>
            <person name="Kimberley A.M."/>
            <person name="King A."/>
            <person name="Laird G.K."/>
            <person name="Langford C.J."/>
            <person name="Lawlor S."/>
            <person name="Leongamornlert D.A."/>
            <person name="Lloyd D.M."/>
            <person name="Lloyd C."/>
            <person name="Loveland J.E."/>
            <person name="Lovell J."/>
            <person name="Martin S."/>
            <person name="Mashreghi-Mohammadi M."/>
            <person name="McLaren S.J."/>
            <person name="McMurray A."/>
            <person name="Milne S."/>
            <person name="Moore M.J.F."/>
            <person name="Nickerson T."/>
            <person name="Palmer S.A."/>
            <person name="Pearce A.V."/>
            <person name="Peck A.I."/>
            <person name="Pelan S."/>
            <person name="Phillimore B."/>
            <person name="Porter K.M."/>
            <person name="Rice C.M."/>
            <person name="Searle S."/>
            <person name="Sehra H.K."/>
            <person name="Shownkeen R."/>
            <person name="Skuce C.D."/>
            <person name="Smith M."/>
            <person name="Steward C.A."/>
            <person name="Sycamore N."/>
            <person name="Tester J."/>
            <person name="Thomas D.W."/>
            <person name="Tracey A."/>
            <person name="Tromans A."/>
            <person name="Tubby B."/>
            <person name="Wall M."/>
            <person name="Wallis J.M."/>
            <person name="West A.P."/>
            <person name="Whitehead S.L."/>
            <person name="Willey D.L."/>
            <person name="Wilming L."/>
            <person name="Wray P.W."/>
            <person name="Wright M.W."/>
            <person name="Young L."/>
            <person name="Coulson A."/>
            <person name="Durbin R.M."/>
            <person name="Hubbard T."/>
            <person name="Sulston J.E."/>
            <person name="Beck S."/>
            <person name="Bentley D.R."/>
            <person name="Rogers J."/>
            <person name="Ross M.T."/>
        </authorList>
    </citation>
    <scope>NUCLEOTIDE SEQUENCE [LARGE SCALE GENOMIC DNA]</scope>
</reference>
<reference key="2">
    <citation type="journal article" date="2004" name="Genome Res.">
        <title>The status, quality, and expansion of the NIH full-length cDNA project: the Mammalian Gene Collection (MGC).</title>
        <authorList>
            <consortium name="The MGC Project Team"/>
        </authorList>
    </citation>
    <scope>NUCLEOTIDE SEQUENCE [LARGE SCALE MRNA] (ISOFORM 2)</scope>
    <scope>NUCLEOTIDE SEQUENCE [LARGE SCALE MRNA] OF 71-503 (ISOFORM 1)</scope>
    <source>
        <tissue>Eye</tissue>
    </source>
</reference>
<reference key="3">
    <citation type="journal article" date="2004" name="Nat. Genet.">
        <title>Complete sequencing and characterization of 21,243 full-length human cDNAs.</title>
        <authorList>
            <person name="Ota T."/>
            <person name="Suzuki Y."/>
            <person name="Nishikawa T."/>
            <person name="Otsuki T."/>
            <person name="Sugiyama T."/>
            <person name="Irie R."/>
            <person name="Wakamatsu A."/>
            <person name="Hayashi K."/>
            <person name="Sato H."/>
            <person name="Nagai K."/>
            <person name="Kimura K."/>
            <person name="Makita H."/>
            <person name="Sekine M."/>
            <person name="Obayashi M."/>
            <person name="Nishi T."/>
            <person name="Shibahara T."/>
            <person name="Tanaka T."/>
            <person name="Ishii S."/>
            <person name="Yamamoto J."/>
            <person name="Saito K."/>
            <person name="Kawai Y."/>
            <person name="Isono Y."/>
            <person name="Nakamura Y."/>
            <person name="Nagahari K."/>
            <person name="Murakami K."/>
            <person name="Yasuda T."/>
            <person name="Iwayanagi T."/>
            <person name="Wagatsuma M."/>
            <person name="Shiratori A."/>
            <person name="Sudo H."/>
            <person name="Hosoiri T."/>
            <person name="Kaku Y."/>
            <person name="Kodaira H."/>
            <person name="Kondo H."/>
            <person name="Sugawara M."/>
            <person name="Takahashi M."/>
            <person name="Kanda K."/>
            <person name="Yokoi T."/>
            <person name="Furuya T."/>
            <person name="Kikkawa E."/>
            <person name="Omura Y."/>
            <person name="Abe K."/>
            <person name="Kamihara K."/>
            <person name="Katsuta N."/>
            <person name="Sato K."/>
            <person name="Tanikawa M."/>
            <person name="Yamazaki M."/>
            <person name="Ninomiya K."/>
            <person name="Ishibashi T."/>
            <person name="Yamashita H."/>
            <person name="Murakawa K."/>
            <person name="Fujimori K."/>
            <person name="Tanai H."/>
            <person name="Kimata M."/>
            <person name="Watanabe M."/>
            <person name="Hiraoka S."/>
            <person name="Chiba Y."/>
            <person name="Ishida S."/>
            <person name="Ono Y."/>
            <person name="Takiguchi S."/>
            <person name="Watanabe S."/>
            <person name="Yosida M."/>
            <person name="Hotuta T."/>
            <person name="Kusano J."/>
            <person name="Kanehori K."/>
            <person name="Takahashi-Fujii A."/>
            <person name="Hara H."/>
            <person name="Tanase T.-O."/>
            <person name="Nomura Y."/>
            <person name="Togiya S."/>
            <person name="Komai F."/>
            <person name="Hara R."/>
            <person name="Takeuchi K."/>
            <person name="Arita M."/>
            <person name="Imose N."/>
            <person name="Musashino K."/>
            <person name="Yuuki H."/>
            <person name="Oshima A."/>
            <person name="Sasaki N."/>
            <person name="Aotsuka S."/>
            <person name="Yoshikawa Y."/>
            <person name="Matsunawa H."/>
            <person name="Ichihara T."/>
            <person name="Shiohata N."/>
            <person name="Sano S."/>
            <person name="Moriya S."/>
            <person name="Momiyama H."/>
            <person name="Satoh N."/>
            <person name="Takami S."/>
            <person name="Terashima Y."/>
            <person name="Suzuki O."/>
            <person name="Nakagawa S."/>
            <person name="Senoh A."/>
            <person name="Mizoguchi H."/>
            <person name="Goto Y."/>
            <person name="Shimizu F."/>
            <person name="Wakebe H."/>
            <person name="Hishigaki H."/>
            <person name="Watanabe T."/>
            <person name="Sugiyama A."/>
            <person name="Takemoto M."/>
            <person name="Kawakami B."/>
            <person name="Yamazaki M."/>
            <person name="Watanabe K."/>
            <person name="Kumagai A."/>
            <person name="Itakura S."/>
            <person name="Fukuzumi Y."/>
            <person name="Fujimori Y."/>
            <person name="Komiyama M."/>
            <person name="Tashiro H."/>
            <person name="Tanigami A."/>
            <person name="Fujiwara T."/>
            <person name="Ono T."/>
            <person name="Yamada K."/>
            <person name="Fujii Y."/>
            <person name="Ozaki K."/>
            <person name="Hirao M."/>
            <person name="Ohmori Y."/>
            <person name="Kawabata A."/>
            <person name="Hikiji T."/>
            <person name="Kobatake N."/>
            <person name="Inagaki H."/>
            <person name="Ikema Y."/>
            <person name="Okamoto S."/>
            <person name="Okitani R."/>
            <person name="Kawakami T."/>
            <person name="Noguchi S."/>
            <person name="Itoh T."/>
            <person name="Shigeta K."/>
            <person name="Senba T."/>
            <person name="Matsumura K."/>
            <person name="Nakajima Y."/>
            <person name="Mizuno T."/>
            <person name="Morinaga M."/>
            <person name="Sasaki M."/>
            <person name="Togashi T."/>
            <person name="Oyama M."/>
            <person name="Hata H."/>
            <person name="Watanabe M."/>
            <person name="Komatsu T."/>
            <person name="Mizushima-Sugano J."/>
            <person name="Satoh T."/>
            <person name="Shirai Y."/>
            <person name="Takahashi Y."/>
            <person name="Nakagawa K."/>
            <person name="Okumura K."/>
            <person name="Nagase T."/>
            <person name="Nomura N."/>
            <person name="Kikuchi H."/>
            <person name="Masuho Y."/>
            <person name="Yamashita R."/>
            <person name="Nakai K."/>
            <person name="Yada T."/>
            <person name="Nakamura Y."/>
            <person name="Ohara O."/>
            <person name="Isogai T."/>
            <person name="Sugano S."/>
        </authorList>
    </citation>
    <scope>NUCLEOTIDE SEQUENCE [LARGE SCALE MRNA] OF 38-503 (ISOFORM 1)</scope>
    <source>
        <tissue>Colon</tissue>
    </source>
</reference>
<reference key="4">
    <citation type="journal article" date="2002" name="Genomics">
        <title>BIVM, a novel gene widely distributed among deuterostomes, shares a core sequence with an unusual gene in Giardia lamblia.</title>
        <authorList>
            <person name="Yoder J.A."/>
            <person name="Hawke N.A."/>
            <person name="Eason D.D."/>
            <person name="Mueller M.G."/>
            <person name="Davids B.J."/>
            <person name="Gillin F.D."/>
            <person name="Litman G.W."/>
        </authorList>
    </citation>
    <scope>SUBCELLULAR LOCATION</scope>
    <scope>TISSUE SPECIFICITY</scope>
</reference>
<gene>
    <name type="primary">BIVM</name>
</gene>
<proteinExistence type="evidence at protein level"/>
<name>BIVM_HUMAN</name>
<evidence type="ECO:0000256" key="1">
    <source>
        <dbReference type="SAM" id="MobiDB-lite"/>
    </source>
</evidence>
<evidence type="ECO:0000269" key="2">
    <source>
    </source>
</evidence>
<evidence type="ECO:0000303" key="3">
    <source>
    </source>
</evidence>
<evidence type="ECO:0000305" key="4"/>
<feature type="chain" id="PRO_0000328955" description="Basic immunoglobulin-like variable motif-containing protein">
    <location>
        <begin position="1"/>
        <end position="503"/>
    </location>
</feature>
<feature type="region of interest" description="Disordered" evidence="1">
    <location>
        <begin position="1"/>
        <end position="33"/>
    </location>
</feature>
<feature type="region of interest" description="Disordered" evidence="1">
    <location>
        <begin position="152"/>
        <end position="184"/>
    </location>
</feature>
<feature type="region of interest" description="Disordered" evidence="1">
    <location>
        <begin position="438"/>
        <end position="469"/>
    </location>
</feature>
<feature type="compositionally biased region" description="Basic and acidic residues" evidence="1">
    <location>
        <begin position="1"/>
        <end position="26"/>
    </location>
</feature>
<feature type="compositionally biased region" description="Basic residues" evidence="1">
    <location>
        <begin position="155"/>
        <end position="172"/>
    </location>
</feature>
<feature type="compositionally biased region" description="Basic and acidic residues" evidence="1">
    <location>
        <begin position="173"/>
        <end position="184"/>
    </location>
</feature>
<feature type="splice variant" id="VSP_032855" description="In isoform 2." evidence="3">
    <location>
        <begin position="1"/>
        <end position="229"/>
    </location>
</feature>
<feature type="splice variant" id="VSP_032856" description="In isoform 2." evidence="3">
    <original>K</original>
    <variation>KPTFFSSQ</variation>
    <location>
        <position position="406"/>
    </location>
</feature>
<feature type="sequence conflict" description="In Ref. 3; BAA90986." evidence="4" ref="3">
    <original>N</original>
    <variation>D</variation>
    <location>
        <position position="224"/>
    </location>
</feature>
<dbReference type="EMBL" id="AL157769">
    <property type="status" value="NOT_ANNOTATED_CDS"/>
    <property type="molecule type" value="Genomic_DNA"/>
</dbReference>
<dbReference type="EMBL" id="BC051813">
    <property type="protein sequence ID" value="AAH51813.2"/>
    <property type="status" value="ALT_INIT"/>
    <property type="molecule type" value="mRNA"/>
</dbReference>
<dbReference type="EMBL" id="BC112339">
    <property type="protein sequence ID" value="AAI12340.1"/>
    <property type="molecule type" value="mRNA"/>
</dbReference>
<dbReference type="EMBL" id="AK000166">
    <property type="protein sequence ID" value="BAA90986.1"/>
    <property type="status" value="ALT_INIT"/>
    <property type="molecule type" value="mRNA"/>
</dbReference>
<dbReference type="CCDS" id="CCDS53879.1">
    <molecule id="Q86UB2-2"/>
</dbReference>
<dbReference type="CCDS" id="CCDS9505.1">
    <molecule id="Q86UB2-1"/>
</dbReference>
<dbReference type="RefSeq" id="NP_001153068.1">
    <molecule id="Q86UB2-2"/>
    <property type="nucleotide sequence ID" value="NM_001159596.2"/>
</dbReference>
<dbReference type="RefSeq" id="NP_060163.2">
    <molecule id="Q86UB2-1"/>
    <property type="nucleotide sequence ID" value="NM_017693.3"/>
</dbReference>
<dbReference type="BioGRID" id="120192">
    <property type="interactions" value="13"/>
</dbReference>
<dbReference type="FunCoup" id="Q86UB2">
    <property type="interactions" value="284"/>
</dbReference>
<dbReference type="IntAct" id="Q86UB2">
    <property type="interactions" value="8"/>
</dbReference>
<dbReference type="STRING" id="9606.ENSP00000257336"/>
<dbReference type="iPTMnet" id="Q86UB2"/>
<dbReference type="PhosphoSitePlus" id="Q86UB2"/>
<dbReference type="BioMuta" id="BIVM"/>
<dbReference type="DMDM" id="182627634"/>
<dbReference type="jPOST" id="Q86UB2"/>
<dbReference type="MassIVE" id="Q86UB2"/>
<dbReference type="PaxDb" id="9606-ENSP00000257336"/>
<dbReference type="PeptideAtlas" id="Q86UB2"/>
<dbReference type="Antibodypedia" id="11219">
    <property type="antibodies" value="107 antibodies from 25 providers"/>
</dbReference>
<dbReference type="DNASU" id="54841"/>
<dbReference type="Ensembl" id="ENST00000257336.6">
    <molecule id="Q86UB2-1"/>
    <property type="protein sequence ID" value="ENSP00000257336.1"/>
    <property type="gene ID" value="ENSG00000134897.14"/>
</dbReference>
<dbReference type="Ensembl" id="ENST00000448849.3">
    <molecule id="Q86UB2-2"/>
    <property type="protein sequence ID" value="ENSP00000412794.2"/>
    <property type="gene ID" value="ENSG00000134897.14"/>
</dbReference>
<dbReference type="Ensembl" id="ENST00000652084.1">
    <molecule id="Q86UB2-1"/>
    <property type="protein sequence ID" value="ENSP00000498544.1"/>
    <property type="gene ID" value="ENSG00000134897.14"/>
</dbReference>
<dbReference type="GeneID" id="54841"/>
<dbReference type="KEGG" id="hsa:54841"/>
<dbReference type="MANE-Select" id="ENST00000257336.6">
    <property type="protein sequence ID" value="ENSP00000257336.1"/>
    <property type="RefSeq nucleotide sequence ID" value="NM_017693.4"/>
    <property type="RefSeq protein sequence ID" value="NP_060163.2"/>
</dbReference>
<dbReference type="UCSC" id="uc001vps.4">
    <molecule id="Q86UB2-1"/>
    <property type="organism name" value="human"/>
</dbReference>
<dbReference type="AGR" id="HGNC:16034"/>
<dbReference type="CTD" id="54841"/>
<dbReference type="GeneCards" id="BIVM"/>
<dbReference type="HGNC" id="HGNC:16034">
    <property type="gene designation" value="BIVM"/>
</dbReference>
<dbReference type="HPA" id="ENSG00000134897">
    <property type="expression patterns" value="Low tissue specificity"/>
</dbReference>
<dbReference type="MIM" id="619006">
    <property type="type" value="gene"/>
</dbReference>
<dbReference type="neXtProt" id="NX_Q86UB2"/>
<dbReference type="OpenTargets" id="ENSG00000134897"/>
<dbReference type="PharmGKB" id="PA25366"/>
<dbReference type="VEuPathDB" id="HostDB:ENSG00000134897"/>
<dbReference type="eggNOG" id="ENOG502QUM8">
    <property type="taxonomic scope" value="Eukaryota"/>
</dbReference>
<dbReference type="GeneTree" id="ENSGT00510000048601"/>
<dbReference type="HOGENOM" id="CLU_041921_1_0_1"/>
<dbReference type="InParanoid" id="Q86UB2"/>
<dbReference type="OMA" id="HCLMAFQ"/>
<dbReference type="OrthoDB" id="31113at2759"/>
<dbReference type="PAN-GO" id="Q86UB2">
    <property type="GO annotations" value="0 GO annotations based on evolutionary models"/>
</dbReference>
<dbReference type="PhylomeDB" id="Q86UB2"/>
<dbReference type="TreeFam" id="TF331304"/>
<dbReference type="PathwayCommons" id="Q86UB2"/>
<dbReference type="SignaLink" id="Q86UB2"/>
<dbReference type="BioGRID-ORCS" id="54841">
    <property type="hits" value="19 hits in 1143 CRISPR screens"/>
</dbReference>
<dbReference type="ChiTaRS" id="BIVM">
    <property type="organism name" value="human"/>
</dbReference>
<dbReference type="GenomeRNAi" id="54841"/>
<dbReference type="Pharos" id="Q86UB2">
    <property type="development level" value="Tdark"/>
</dbReference>
<dbReference type="PRO" id="PR:Q86UB2"/>
<dbReference type="Proteomes" id="UP000005640">
    <property type="component" value="Chromosome 13"/>
</dbReference>
<dbReference type="RNAct" id="Q86UB2">
    <property type="molecule type" value="protein"/>
</dbReference>
<dbReference type="Bgee" id="ENSG00000134897">
    <property type="expression patterns" value="Expressed in left ventricle myocardium and 176 other cell types or tissues"/>
</dbReference>
<dbReference type="ExpressionAtlas" id="Q86UB2">
    <property type="expression patterns" value="baseline and differential"/>
</dbReference>
<dbReference type="GO" id="GO:0005737">
    <property type="term" value="C:cytoplasm"/>
    <property type="evidence" value="ECO:0007669"/>
    <property type="project" value="UniProtKB-SubCell"/>
</dbReference>
<dbReference type="GO" id="GO:0005615">
    <property type="term" value="C:extracellular space"/>
    <property type="evidence" value="ECO:0007005"/>
    <property type="project" value="UniProtKB"/>
</dbReference>
<dbReference type="GO" id="GO:0005634">
    <property type="term" value="C:nucleus"/>
    <property type="evidence" value="ECO:0000318"/>
    <property type="project" value="GO_Central"/>
</dbReference>
<dbReference type="GO" id="GO:0004520">
    <property type="term" value="F:DNA endonuclease activity"/>
    <property type="evidence" value="ECO:0000318"/>
    <property type="project" value="GO_Central"/>
</dbReference>
<dbReference type="GO" id="GO:0003697">
    <property type="term" value="F:single-stranded DNA binding"/>
    <property type="evidence" value="ECO:0000318"/>
    <property type="project" value="GO_Central"/>
</dbReference>
<dbReference type="PANTHER" id="PTHR16171:SF13">
    <property type="entry name" value="BASIC IMMUNOGLOBULIN-LIKE VARIABLE MOTIF-CONTAINING PROTEIN"/>
    <property type="match status" value="1"/>
</dbReference>
<dbReference type="PANTHER" id="PTHR16171">
    <property type="entry name" value="DNA REPAIR PROTEIN COMPLEMENTING XP-G CELLS-RELATED"/>
    <property type="match status" value="1"/>
</dbReference>
<comment type="interaction">
    <interactant intactId="EBI-12191873">
        <id>Q86UB2</id>
    </interactant>
    <interactant intactId="EBI-741542">
        <id>Q9UIF8</id>
        <label>BAZ2B</label>
    </interactant>
    <organismsDiffer>false</organismsDiffer>
    <experiments>3</experiments>
</comment>
<comment type="interaction">
    <interactant intactId="EBI-12191873">
        <id>Q86UB2</id>
    </interactant>
    <interactant intactId="EBI-739909">
        <id>Q969R5</id>
        <label>L3MBTL2</label>
    </interactant>
    <organismsDiffer>false</organismsDiffer>
    <experiments>3</experiments>
</comment>
<comment type="interaction">
    <interactant intactId="EBI-12191873">
        <id>Q86UB2</id>
    </interactant>
    <interactant intactId="EBI-8639312">
        <id>P25800</id>
        <label>LMO1</label>
    </interactant>
    <organismsDiffer>false</organismsDiffer>
    <experiments>3</experiments>
</comment>
<comment type="interaction">
    <interactant intactId="EBI-12191873">
        <id>Q86UB2</id>
    </interactant>
    <interactant intactId="EBI-12226639">
        <id>Q8IXY8</id>
        <label>PPIL6</label>
    </interactant>
    <organismsDiffer>false</organismsDiffer>
    <experiments>3</experiments>
</comment>
<comment type="interaction">
    <interactant intactId="EBI-12191873">
        <id>Q86UB2</id>
    </interactant>
    <interactant intactId="EBI-12023934">
        <id>Q5MJ10</id>
        <label>SPANXN2</label>
    </interactant>
    <organismsDiffer>false</organismsDiffer>
    <experiments>5</experiments>
</comment>
<comment type="interaction">
    <interactant intactId="EBI-12191873">
        <id>Q86UB2</id>
    </interactant>
    <interactant intactId="EBI-357631">
        <id>Q13114</id>
        <label>TRAF3</label>
    </interactant>
    <organismsDiffer>false</organismsDiffer>
    <experiments>6</experiments>
</comment>
<comment type="interaction">
    <interactant intactId="EBI-12191873">
        <id>Q86UB2</id>
    </interactant>
    <interactant intactId="EBI-2341136">
        <id>Q12899</id>
        <label>TRIM26</label>
    </interactant>
    <organismsDiffer>false</organismsDiffer>
    <experiments>3</experiments>
</comment>
<comment type="interaction">
    <interactant intactId="EBI-12191873">
        <id>Q86UB2</id>
    </interactant>
    <interactant intactId="EBI-725997">
        <id>Q8WV44</id>
        <label>TRIM41</label>
    </interactant>
    <organismsDiffer>false</organismsDiffer>
    <experiments>3</experiments>
</comment>
<comment type="subcellular location">
    <subcellularLocation>
        <location evidence="2">Cytoplasm</location>
    </subcellularLocation>
    <subcellularLocation>
        <location evidence="2">Nucleus</location>
    </subcellularLocation>
</comment>
<comment type="alternative products">
    <event type="alternative splicing"/>
    <isoform>
        <id>Q86UB2-1</id>
        <name>1</name>
        <sequence type="displayed"/>
    </isoform>
    <isoform>
        <id>Q86UB2-2</id>
        <name>2</name>
        <sequence type="described" ref="VSP_032855 VSP_032856"/>
    </isoform>
</comment>
<comment type="tissue specificity">
    <text evidence="2">Widely expressed. Expressed at higher level in spleen, ovary, small intestine, colon, peripheral blood leukocytes and liver. Also expressed in testis, ovary, aorta, appendix, trachea, pituitary gland, bladder, uterus, spinal cord, salivary gland, stomach, mammary gland and bone marrow. Weakly or not expressed in fetal spleen, adult thymus and certain cancer cell lines.</text>
</comment>
<comment type="similarity">
    <text evidence="4">Belongs to the BIVM family.</text>
</comment>
<comment type="sequence caution" evidence="4">
    <conflict type="erroneous initiation">
        <sequence resource="EMBL-CDS" id="AAH51813"/>
    </conflict>
</comment>
<comment type="sequence caution" evidence="4">
    <conflict type="erroneous initiation">
        <sequence resource="EMBL-CDS" id="BAA90986"/>
    </conflict>
</comment>
<protein>
    <recommendedName>
        <fullName>Basic immunoglobulin-like variable motif-containing protein</fullName>
    </recommendedName>
</protein>
<sequence>MPNVAETERSNDSGNGEHKSERKSPEENLQGAVKSFCTSASGAPLGPKGDGHYPWSCPVTHTREKIYAICSDYAFLNQATSIYKTPNPSRSPCLPDSTSLSAGNNSSRYIGIPTSTSEIIYNEENSLENLSNSLGKLPLAWEIDKSEFDGVTTNSKHKSGNAKKQVSKRKTSDKKGRYQKECPQHSPLEDIKQRKVLDLRRWYCISRPQYKTSCGISSLISCWNFLYSTMGAGNLPPITQEEALHILGFQPPFEDIRFGPFTGNTTLMRWFRQINDHFHVKGCSYVLYKPHGKNKTAGETASGALSKLTRGLKDESLAYIYHCQNHYFCPIGFEATPVKANKAFSRGPLSPQEVEYWILIGESSRKHPAIHCKKWADIVTDLNTQNPEYLDIRHLERGLQYRKTKKVGGNLHCIIAFQRLNWQRFGLWNFPFGTIRQESQPPTHAQGIAKSESEDNISKKQHGRLGRSFSASFHQDSAWKKMSSIHERRNSGYQGYSDYDGND</sequence>